<feature type="chain" id="PRO_1000003907" description="Small ribosomal subunit protein uS2">
    <location>
        <begin position="1"/>
        <end position="246"/>
    </location>
</feature>
<dbReference type="EMBL" id="CP000458">
    <property type="protein sequence ID" value="ABK08770.1"/>
    <property type="molecule type" value="Genomic_DNA"/>
</dbReference>
<dbReference type="RefSeq" id="WP_011352461.1">
    <property type="nucleotide sequence ID" value="NC_008542.1"/>
</dbReference>
<dbReference type="SMR" id="A0K8E3"/>
<dbReference type="GeneID" id="93143971"/>
<dbReference type="KEGG" id="bch:Bcen2424_2019"/>
<dbReference type="HOGENOM" id="CLU_040318_1_2_4"/>
<dbReference type="GO" id="GO:0022627">
    <property type="term" value="C:cytosolic small ribosomal subunit"/>
    <property type="evidence" value="ECO:0007669"/>
    <property type="project" value="TreeGrafter"/>
</dbReference>
<dbReference type="GO" id="GO:0003735">
    <property type="term" value="F:structural constituent of ribosome"/>
    <property type="evidence" value="ECO:0007669"/>
    <property type="project" value="InterPro"/>
</dbReference>
<dbReference type="GO" id="GO:0006412">
    <property type="term" value="P:translation"/>
    <property type="evidence" value="ECO:0007669"/>
    <property type="project" value="UniProtKB-UniRule"/>
</dbReference>
<dbReference type="CDD" id="cd01425">
    <property type="entry name" value="RPS2"/>
    <property type="match status" value="1"/>
</dbReference>
<dbReference type="FunFam" id="1.10.287.610:FF:000001">
    <property type="entry name" value="30S ribosomal protein S2"/>
    <property type="match status" value="1"/>
</dbReference>
<dbReference type="Gene3D" id="3.40.50.10490">
    <property type="entry name" value="Glucose-6-phosphate isomerase like protein, domain 1"/>
    <property type="match status" value="1"/>
</dbReference>
<dbReference type="Gene3D" id="1.10.287.610">
    <property type="entry name" value="Helix hairpin bin"/>
    <property type="match status" value="1"/>
</dbReference>
<dbReference type="HAMAP" id="MF_00291_B">
    <property type="entry name" value="Ribosomal_uS2_B"/>
    <property type="match status" value="1"/>
</dbReference>
<dbReference type="InterPro" id="IPR001865">
    <property type="entry name" value="Ribosomal_uS2"/>
</dbReference>
<dbReference type="InterPro" id="IPR005706">
    <property type="entry name" value="Ribosomal_uS2_bac/mit/plastid"/>
</dbReference>
<dbReference type="InterPro" id="IPR018130">
    <property type="entry name" value="Ribosomal_uS2_CS"/>
</dbReference>
<dbReference type="InterPro" id="IPR023591">
    <property type="entry name" value="Ribosomal_uS2_flav_dom_sf"/>
</dbReference>
<dbReference type="NCBIfam" id="TIGR01011">
    <property type="entry name" value="rpsB_bact"/>
    <property type="match status" value="1"/>
</dbReference>
<dbReference type="PANTHER" id="PTHR12534">
    <property type="entry name" value="30S RIBOSOMAL PROTEIN S2 PROKARYOTIC AND ORGANELLAR"/>
    <property type="match status" value="1"/>
</dbReference>
<dbReference type="PANTHER" id="PTHR12534:SF0">
    <property type="entry name" value="SMALL RIBOSOMAL SUBUNIT PROTEIN US2M"/>
    <property type="match status" value="1"/>
</dbReference>
<dbReference type="Pfam" id="PF00318">
    <property type="entry name" value="Ribosomal_S2"/>
    <property type="match status" value="1"/>
</dbReference>
<dbReference type="PRINTS" id="PR00395">
    <property type="entry name" value="RIBOSOMALS2"/>
</dbReference>
<dbReference type="SUPFAM" id="SSF52313">
    <property type="entry name" value="Ribosomal protein S2"/>
    <property type="match status" value="1"/>
</dbReference>
<dbReference type="PROSITE" id="PS00962">
    <property type="entry name" value="RIBOSOMAL_S2_1"/>
    <property type="match status" value="1"/>
</dbReference>
<keyword id="KW-0687">Ribonucleoprotein</keyword>
<keyword id="KW-0689">Ribosomal protein</keyword>
<comment type="similarity">
    <text evidence="1">Belongs to the universal ribosomal protein uS2 family.</text>
</comment>
<protein>
    <recommendedName>
        <fullName evidence="1">Small ribosomal subunit protein uS2</fullName>
    </recommendedName>
    <alternativeName>
        <fullName evidence="2">30S ribosomal protein S2</fullName>
    </alternativeName>
</protein>
<gene>
    <name evidence="1" type="primary">rpsB</name>
    <name type="ordered locus">Bcen2424_2019</name>
</gene>
<evidence type="ECO:0000255" key="1">
    <source>
        <dbReference type="HAMAP-Rule" id="MF_00291"/>
    </source>
</evidence>
<evidence type="ECO:0000305" key="2"/>
<sequence length="246" mass="27119">MAVTMRQMLEAGVHFGHQTRFWNPKMAPFIFGHRNKIHIINLEKTLPMFTDAQKYVRQLAANRGTILFVGTKRQSRDTIAQEAQRAGMPYVNARWLGGMMTNFKTLKVSIKRLKDMEAAVESGETEKMSKKEALLFEREIAKLQKSIGGVKDMGGIPDAIFVVDVGYHKIAVTEANKLGVPVIAVVDTNHSPEGVDYVIPGNDDSSKAVALYAEGVADAILEGRANAVNEVVQAARGDDEYVEENA</sequence>
<proteinExistence type="inferred from homology"/>
<organism>
    <name type="scientific">Burkholderia cenocepacia (strain HI2424)</name>
    <dbReference type="NCBI Taxonomy" id="331272"/>
    <lineage>
        <taxon>Bacteria</taxon>
        <taxon>Pseudomonadati</taxon>
        <taxon>Pseudomonadota</taxon>
        <taxon>Betaproteobacteria</taxon>
        <taxon>Burkholderiales</taxon>
        <taxon>Burkholderiaceae</taxon>
        <taxon>Burkholderia</taxon>
        <taxon>Burkholderia cepacia complex</taxon>
    </lineage>
</organism>
<reference key="1">
    <citation type="submission" date="2006-08" db="EMBL/GenBank/DDBJ databases">
        <title>Complete sequence of chromosome 1 of Burkholderia cenocepacia HI2424.</title>
        <authorList>
            <person name="Copeland A."/>
            <person name="Lucas S."/>
            <person name="Lapidus A."/>
            <person name="Barry K."/>
            <person name="Detter J.C."/>
            <person name="Glavina del Rio T."/>
            <person name="Hammon N."/>
            <person name="Israni S."/>
            <person name="Pitluck S."/>
            <person name="Chain P."/>
            <person name="Malfatti S."/>
            <person name="Shin M."/>
            <person name="Vergez L."/>
            <person name="Schmutz J."/>
            <person name="Larimer F."/>
            <person name="Land M."/>
            <person name="Hauser L."/>
            <person name="Kyrpides N."/>
            <person name="Kim E."/>
            <person name="LiPuma J.J."/>
            <person name="Gonzalez C.F."/>
            <person name="Konstantinidis K."/>
            <person name="Tiedje J.M."/>
            <person name="Richardson P."/>
        </authorList>
    </citation>
    <scope>NUCLEOTIDE SEQUENCE [LARGE SCALE GENOMIC DNA]</scope>
    <source>
        <strain>HI2424</strain>
    </source>
</reference>
<name>RS2_BURCH</name>
<accession>A0K8E3</accession>